<proteinExistence type="predicted"/>
<feature type="chain" id="PRO_0000462461" description="Cysteine protease immunity 1">
    <location>
        <begin position="1"/>
        <end position="96"/>
    </location>
</feature>
<organism>
    <name type="scientific">Escherichia coli O1:K1:H7 (strain ATCC 11775 / DSM 30083 / JCM 1649 / NBRC 102203 / NCTC 9001 / U5/41)</name>
    <dbReference type="NCBI Taxonomy" id="866789"/>
    <lineage>
        <taxon>Bacteria</taxon>
        <taxon>Pseudomonadati</taxon>
        <taxon>Pseudomonadota</taxon>
        <taxon>Gammaproteobacteria</taxon>
        <taxon>Enterobacterales</taxon>
        <taxon>Enterobacteriaceae</taxon>
        <taxon>Escherichia</taxon>
    </lineage>
</organism>
<sequence length="96" mass="10773">MGIVFTNHNIDLLSVEFDEITKNCNYTFSVDGETAIFTARISIIRNIKGIKYSEELDKFIMSIMPLQPKVSKILGGVTWDCICGKEVGFPVRLIGK</sequence>
<dbReference type="EMBL" id="CP033092">
    <property type="protein sequence ID" value="AYO72531.1"/>
    <property type="molecule type" value="Genomic_DNA"/>
</dbReference>
<name>CPI1_ECOU5</name>
<evidence type="ECO:0000305" key="1"/>
<gene>
    <name evidence="1" type="primary">cpi1</name>
    <name type="ORF">EAS44_10545</name>
</gene>
<accession>P0DXY0</accession>
<reference key="1">
    <citation type="journal article" date="2019" name="Microbiol. Resour. Announc.">
        <title>Complete Genome and Plasmid Sequences of Escherichia coli Type Strain ATCC 11775.</title>
        <authorList>
            <person name="Wadley T.D."/>
            <person name="Jenjaroenpun P."/>
            <person name="Wongsurawat T."/>
            <person name="Ussery D.W."/>
            <person name="Nookaew I."/>
        </authorList>
    </citation>
    <scope>NUCLEOTIDE SEQUENCE [LARGE SCALE GENOMIC DNA]</scope>
    <source>
        <strain>ATCC 11775 / DSM 30083 / JCM 1649 / NBRC 102203 / NCTC 9001 / U5/41</strain>
    </source>
</reference>
<protein>
    <recommendedName>
        <fullName evidence="1">Cysteine protease immunity 1</fullName>
    </recommendedName>
</protein>